<comment type="function">
    <text evidence="1">Catalyzes the transfer of the diacylglyceryl group from phosphatidylglycerol to the sulfhydryl group of the N-terminal cysteine of a prolipoprotein, the first step in the formation of mature lipoproteins.</text>
</comment>
<comment type="catalytic activity">
    <reaction evidence="1">
        <text>L-cysteinyl-[prolipoprotein] + a 1,2-diacyl-sn-glycero-3-phospho-(1'-sn-glycerol) = an S-1,2-diacyl-sn-glyceryl-L-cysteinyl-[prolipoprotein] + sn-glycerol 1-phosphate + H(+)</text>
        <dbReference type="Rhea" id="RHEA:56712"/>
        <dbReference type="Rhea" id="RHEA-COMP:14679"/>
        <dbReference type="Rhea" id="RHEA-COMP:14680"/>
        <dbReference type="ChEBI" id="CHEBI:15378"/>
        <dbReference type="ChEBI" id="CHEBI:29950"/>
        <dbReference type="ChEBI" id="CHEBI:57685"/>
        <dbReference type="ChEBI" id="CHEBI:64716"/>
        <dbReference type="ChEBI" id="CHEBI:140658"/>
        <dbReference type="EC" id="2.5.1.145"/>
    </reaction>
</comment>
<comment type="pathway">
    <text evidence="1">Protein modification; lipoprotein biosynthesis (diacylglyceryl transfer).</text>
</comment>
<comment type="subcellular location">
    <subcellularLocation>
        <location evidence="1">Cell inner membrane</location>
        <topology evidence="1">Multi-pass membrane protein</topology>
    </subcellularLocation>
</comment>
<comment type="similarity">
    <text evidence="1">Belongs to the Lgt family.</text>
</comment>
<dbReference type="EC" id="2.5.1.145" evidence="1"/>
<dbReference type="EMBL" id="CR555306">
    <property type="protein sequence ID" value="CAI07112.1"/>
    <property type="molecule type" value="Genomic_DNA"/>
</dbReference>
<dbReference type="RefSeq" id="WP_011236837.1">
    <property type="nucleotide sequence ID" value="NC_006513.1"/>
</dbReference>
<dbReference type="SMR" id="Q5P6E9"/>
<dbReference type="STRING" id="76114.ebA1825"/>
<dbReference type="KEGG" id="eba:ebA1825"/>
<dbReference type="eggNOG" id="COG0682">
    <property type="taxonomic scope" value="Bacteria"/>
</dbReference>
<dbReference type="HOGENOM" id="CLU_013386_1_0_4"/>
<dbReference type="OrthoDB" id="871140at2"/>
<dbReference type="UniPathway" id="UPA00664"/>
<dbReference type="Proteomes" id="UP000006552">
    <property type="component" value="Chromosome"/>
</dbReference>
<dbReference type="GO" id="GO:0005886">
    <property type="term" value="C:plasma membrane"/>
    <property type="evidence" value="ECO:0007669"/>
    <property type="project" value="UniProtKB-SubCell"/>
</dbReference>
<dbReference type="GO" id="GO:0008961">
    <property type="term" value="F:phosphatidylglycerol-prolipoprotein diacylglyceryl transferase activity"/>
    <property type="evidence" value="ECO:0007669"/>
    <property type="project" value="UniProtKB-UniRule"/>
</dbReference>
<dbReference type="GO" id="GO:0042158">
    <property type="term" value="P:lipoprotein biosynthetic process"/>
    <property type="evidence" value="ECO:0007669"/>
    <property type="project" value="UniProtKB-UniRule"/>
</dbReference>
<dbReference type="HAMAP" id="MF_01147">
    <property type="entry name" value="Lgt"/>
    <property type="match status" value="1"/>
</dbReference>
<dbReference type="InterPro" id="IPR001640">
    <property type="entry name" value="Lgt"/>
</dbReference>
<dbReference type="NCBIfam" id="TIGR00544">
    <property type="entry name" value="lgt"/>
    <property type="match status" value="1"/>
</dbReference>
<dbReference type="PANTHER" id="PTHR30589:SF0">
    <property type="entry name" value="PHOSPHATIDYLGLYCEROL--PROLIPOPROTEIN DIACYLGLYCERYL TRANSFERASE"/>
    <property type="match status" value="1"/>
</dbReference>
<dbReference type="PANTHER" id="PTHR30589">
    <property type="entry name" value="PROLIPOPROTEIN DIACYLGLYCERYL TRANSFERASE"/>
    <property type="match status" value="1"/>
</dbReference>
<dbReference type="Pfam" id="PF01790">
    <property type="entry name" value="LGT"/>
    <property type="match status" value="1"/>
</dbReference>
<dbReference type="PROSITE" id="PS01311">
    <property type="entry name" value="LGT"/>
    <property type="match status" value="1"/>
</dbReference>
<feature type="chain" id="PRO_0000172545" description="Phosphatidylglycerol--prolipoprotein diacylglyceryl transferase">
    <location>
        <begin position="1"/>
        <end position="264"/>
    </location>
</feature>
<feature type="transmembrane region" description="Helical" evidence="1">
    <location>
        <begin position="14"/>
        <end position="34"/>
    </location>
</feature>
<feature type="transmembrane region" description="Helical" evidence="1">
    <location>
        <begin position="57"/>
        <end position="77"/>
    </location>
</feature>
<feature type="transmembrane region" description="Helical" evidence="1">
    <location>
        <begin position="89"/>
        <end position="109"/>
    </location>
</feature>
<feature type="transmembrane region" description="Helical" evidence="1">
    <location>
        <begin position="127"/>
        <end position="147"/>
    </location>
</feature>
<feature type="transmembrane region" description="Helical" evidence="1">
    <location>
        <begin position="176"/>
        <end position="196"/>
    </location>
</feature>
<feature type="transmembrane region" description="Helical" evidence="1">
    <location>
        <begin position="202"/>
        <end position="222"/>
    </location>
</feature>
<feature type="transmembrane region" description="Helical" evidence="1">
    <location>
        <begin position="235"/>
        <end position="255"/>
    </location>
</feature>
<feature type="binding site" evidence="1">
    <location>
        <position position="140"/>
    </location>
    <ligand>
        <name>a 1,2-diacyl-sn-glycero-3-phospho-(1'-sn-glycerol)</name>
        <dbReference type="ChEBI" id="CHEBI:64716"/>
    </ligand>
</feature>
<proteinExistence type="inferred from homology"/>
<protein>
    <recommendedName>
        <fullName evidence="1">Phosphatidylglycerol--prolipoprotein diacylglyceryl transferase</fullName>
        <ecNumber evidence="1">2.5.1.145</ecNumber>
    </recommendedName>
</protein>
<gene>
    <name evidence="1" type="primary">lgt</name>
    <name type="ordered locus">AZOSEA09870</name>
    <name type="ORF">ebA1825</name>
</gene>
<organism>
    <name type="scientific">Aromatoleum aromaticum (strain DSM 19018 / LMG 30748 / EbN1)</name>
    <name type="common">Azoarcus sp. (strain EbN1)</name>
    <dbReference type="NCBI Taxonomy" id="76114"/>
    <lineage>
        <taxon>Bacteria</taxon>
        <taxon>Pseudomonadati</taxon>
        <taxon>Pseudomonadota</taxon>
        <taxon>Betaproteobacteria</taxon>
        <taxon>Rhodocyclales</taxon>
        <taxon>Rhodocyclaceae</taxon>
        <taxon>Aromatoleum</taxon>
    </lineage>
</organism>
<reference key="1">
    <citation type="journal article" date="2005" name="Arch. Microbiol.">
        <title>The genome sequence of an anaerobic aromatic-degrading denitrifying bacterium, strain EbN1.</title>
        <authorList>
            <person name="Rabus R."/>
            <person name="Kube M."/>
            <person name="Heider J."/>
            <person name="Beck A."/>
            <person name="Heitmann K."/>
            <person name="Widdel F."/>
            <person name="Reinhardt R."/>
        </authorList>
    </citation>
    <scope>NUCLEOTIDE SEQUENCE [LARGE SCALE GENOMIC DNA]</scope>
    <source>
        <strain>DSM 19018 / LMG 30748 / EbN1</strain>
    </source>
</reference>
<evidence type="ECO:0000255" key="1">
    <source>
        <dbReference type="HAMAP-Rule" id="MF_01147"/>
    </source>
</evidence>
<keyword id="KW-0997">Cell inner membrane</keyword>
<keyword id="KW-1003">Cell membrane</keyword>
<keyword id="KW-0472">Membrane</keyword>
<keyword id="KW-1185">Reference proteome</keyword>
<keyword id="KW-0808">Transferase</keyword>
<keyword id="KW-0812">Transmembrane</keyword>
<keyword id="KW-1133">Transmembrane helix</keyword>
<sequence>MLIHPQFDPIAFSVGPLSVRWYGLMYLIAFLLFMTLGRVHARRRPELGWNAQQLDDLLLYGMLGVVLGGRLGEVLFFQPAYYFSHPAEILAIWKGGMSFHGGFLGVLVAMWLYGRRSGKGFWQVTDFIAPLVPTGLAAGRLGNFINGELWGRPVQTDVPWAMVYPWVDALPRHPSQLYQVAGEGLLLFAILWVYSARPRPLKAVSAMFLIGYGVLRFAAEFFRTPDPGIFGTLSLGLSTAQWLCVPMIAVGVGLLASTRTDPAH</sequence>
<name>LGT_AROAE</name>
<accession>Q5P6E9</accession>